<protein>
    <recommendedName>
        <fullName evidence="1">Probable Fe(2+)-trafficking protein</fullName>
    </recommendedName>
</protein>
<organism>
    <name type="scientific">Francisella philomiragia subsp. philomiragia (strain ATCC 25017 / CCUG 19701 / FSC 153 / O#319-036)</name>
    <dbReference type="NCBI Taxonomy" id="484022"/>
    <lineage>
        <taxon>Bacteria</taxon>
        <taxon>Pseudomonadati</taxon>
        <taxon>Pseudomonadota</taxon>
        <taxon>Gammaproteobacteria</taxon>
        <taxon>Thiotrichales</taxon>
        <taxon>Francisellaceae</taxon>
        <taxon>Francisella</taxon>
    </lineage>
</organism>
<proteinExistence type="inferred from homology"/>
<evidence type="ECO:0000255" key="1">
    <source>
        <dbReference type="HAMAP-Rule" id="MF_00686"/>
    </source>
</evidence>
<name>FETP_FRAP2</name>
<gene>
    <name type="ordered locus">Fphi_0290</name>
</gene>
<comment type="function">
    <text evidence="1">Could be a mediator in iron transactions between iron acquisition and iron-requiring processes, such as synthesis and/or repair of Fe-S clusters in biosynthetic enzymes.</text>
</comment>
<comment type="similarity">
    <text evidence="1">Belongs to the Fe(2+)-trafficking protein family.</text>
</comment>
<keyword id="KW-0408">Iron</keyword>
<sequence>MTKVLCKKYNEELDAIPFQPLPGELGKKIHSEISNKAWQAWLAHQTILINEYRLNLIEPKAKEFLKEEMQKFLFENKEDKPEQFNEI</sequence>
<reference key="1">
    <citation type="submission" date="2007-12" db="EMBL/GenBank/DDBJ databases">
        <title>Complete sequence of chromosome of Francisella philomiragia subsp. philomiragia ATCC 25017.</title>
        <authorList>
            <consortium name="US DOE Joint Genome Institute"/>
            <person name="Copeland A."/>
            <person name="Lucas S."/>
            <person name="Lapidus A."/>
            <person name="Barry K."/>
            <person name="Detter J.C."/>
            <person name="Glavina del Rio T."/>
            <person name="Hammon N."/>
            <person name="Israni S."/>
            <person name="Dalin E."/>
            <person name="Tice H."/>
            <person name="Pitluck S."/>
            <person name="Chain P."/>
            <person name="Malfatti S."/>
            <person name="Shin M."/>
            <person name="Vergez L."/>
            <person name="Schmutz J."/>
            <person name="Larimer F."/>
            <person name="Land M."/>
            <person name="Hauser L."/>
            <person name="Richardson P."/>
        </authorList>
    </citation>
    <scope>NUCLEOTIDE SEQUENCE [LARGE SCALE GENOMIC DNA]</scope>
    <source>
        <strain>ATCC 25017 / CCUG 19701 / FSC 153 / O#319-036</strain>
    </source>
</reference>
<feature type="chain" id="PRO_1000083076" description="Probable Fe(2+)-trafficking protein">
    <location>
        <begin position="1"/>
        <end position="87"/>
    </location>
</feature>
<accession>B0TZ67</accession>
<dbReference type="EMBL" id="CP000937">
    <property type="protein sequence ID" value="ABZ86506.1"/>
    <property type="molecule type" value="Genomic_DNA"/>
</dbReference>
<dbReference type="SMR" id="B0TZ67"/>
<dbReference type="KEGG" id="fph:Fphi_0290"/>
<dbReference type="eggNOG" id="COG2924">
    <property type="taxonomic scope" value="Bacteria"/>
</dbReference>
<dbReference type="HOGENOM" id="CLU_170994_0_0_6"/>
<dbReference type="GO" id="GO:0005829">
    <property type="term" value="C:cytosol"/>
    <property type="evidence" value="ECO:0007669"/>
    <property type="project" value="TreeGrafter"/>
</dbReference>
<dbReference type="GO" id="GO:0005506">
    <property type="term" value="F:iron ion binding"/>
    <property type="evidence" value="ECO:0007669"/>
    <property type="project" value="UniProtKB-UniRule"/>
</dbReference>
<dbReference type="GO" id="GO:0034599">
    <property type="term" value="P:cellular response to oxidative stress"/>
    <property type="evidence" value="ECO:0007669"/>
    <property type="project" value="TreeGrafter"/>
</dbReference>
<dbReference type="Gene3D" id="1.10.3880.10">
    <property type="entry name" value="Fe(II) trafficking protein YggX"/>
    <property type="match status" value="1"/>
</dbReference>
<dbReference type="HAMAP" id="MF_00686">
    <property type="entry name" value="Fe_traffic_YggX"/>
    <property type="match status" value="1"/>
</dbReference>
<dbReference type="InterPro" id="IPR007457">
    <property type="entry name" value="Fe_traffick_prot_YggX"/>
</dbReference>
<dbReference type="InterPro" id="IPR036766">
    <property type="entry name" value="Fe_traffick_prot_YggX_sf"/>
</dbReference>
<dbReference type="NCBIfam" id="NF003817">
    <property type="entry name" value="PRK05408.1"/>
    <property type="match status" value="1"/>
</dbReference>
<dbReference type="PANTHER" id="PTHR36965">
    <property type="entry name" value="FE(2+)-TRAFFICKING PROTEIN-RELATED"/>
    <property type="match status" value="1"/>
</dbReference>
<dbReference type="PANTHER" id="PTHR36965:SF1">
    <property type="entry name" value="FE(2+)-TRAFFICKING PROTEIN-RELATED"/>
    <property type="match status" value="1"/>
</dbReference>
<dbReference type="Pfam" id="PF04362">
    <property type="entry name" value="Iron_traffic"/>
    <property type="match status" value="1"/>
</dbReference>
<dbReference type="PIRSF" id="PIRSF029827">
    <property type="entry name" value="Fe_traffic_YggX"/>
    <property type="match status" value="1"/>
</dbReference>
<dbReference type="SUPFAM" id="SSF111148">
    <property type="entry name" value="YggX-like"/>
    <property type="match status" value="1"/>
</dbReference>